<feature type="chain" id="PRO_0000105932" description="Adenylyl-sulfate kinase">
    <location>
        <begin position="1"/>
        <end position="211"/>
    </location>
</feature>
<feature type="active site" description="Phosphoserine intermediate" evidence="1">
    <location>
        <position position="107"/>
    </location>
</feature>
<feature type="binding site" evidence="2">
    <location>
        <begin position="32"/>
        <end position="39"/>
    </location>
    <ligand>
        <name>ATP</name>
        <dbReference type="ChEBI" id="CHEBI:30616"/>
    </ligand>
</feature>
<feature type="helix" evidence="5">
    <location>
        <begin position="7"/>
        <end position="10"/>
    </location>
</feature>
<feature type="helix" evidence="5">
    <location>
        <begin position="14"/>
        <end position="21"/>
    </location>
</feature>
<feature type="strand" evidence="5">
    <location>
        <begin position="26"/>
        <end position="31"/>
    </location>
</feature>
<feature type="helix" evidence="4">
    <location>
        <begin position="34"/>
        <end position="36"/>
    </location>
</feature>
<feature type="helix" evidence="5">
    <location>
        <begin position="38"/>
        <end position="53"/>
    </location>
</feature>
<feature type="strand" evidence="5">
    <location>
        <begin position="57"/>
        <end position="60"/>
    </location>
</feature>
<feature type="helix" evidence="5">
    <location>
        <begin position="62"/>
        <end position="65"/>
    </location>
</feature>
<feature type="turn" evidence="5">
    <location>
        <begin position="66"/>
        <end position="72"/>
    </location>
</feature>
<feature type="helix" evidence="5">
    <location>
        <begin position="77"/>
        <end position="96"/>
    </location>
</feature>
<feature type="strand" evidence="5">
    <location>
        <begin position="100"/>
        <end position="104"/>
    </location>
</feature>
<feature type="helix" evidence="5">
    <location>
        <begin position="110"/>
        <end position="121"/>
    </location>
</feature>
<feature type="strand" evidence="5">
    <location>
        <begin position="133"/>
        <end position="139"/>
    </location>
</feature>
<feature type="helix" evidence="5">
    <location>
        <begin position="142"/>
        <end position="146"/>
    </location>
</feature>
<feature type="helix" evidence="5">
    <location>
        <begin position="153"/>
        <end position="158"/>
    </location>
</feature>
<feature type="strand" evidence="5">
    <location>
        <begin position="161"/>
        <end position="164"/>
    </location>
</feature>
<feature type="turn" evidence="5">
    <location>
        <begin position="166"/>
        <end position="168"/>
    </location>
</feature>
<feature type="strand" evidence="5">
    <location>
        <begin position="179"/>
        <end position="183"/>
    </location>
</feature>
<feature type="strand" evidence="5">
    <location>
        <begin position="185"/>
        <end position="187"/>
    </location>
</feature>
<feature type="helix" evidence="5">
    <location>
        <begin position="189"/>
        <end position="202"/>
    </location>
</feature>
<sequence length="211" mass="23770">MSTNITFHASALTRSERTELRNQRGLTIWLTGLSASGKSTLAVELEHQLVRDRRVHAYRLDGDNIRFGLNKDLGFSEADRNENIRRIAEVAKLFADSNSIAITSFISPYRKDRDTARQLHEVATPGEETGLPFVEVYVDVPVEVAEQRDPKGLYKKAREGVIKEFTGISAPYEAPANPEVHVKNYELPVQDAVKQIIDYLDTKGYLPAKKE</sequence>
<protein>
    <recommendedName>
        <fullName>Adenylyl-sulfate kinase</fullName>
        <ecNumber>2.7.1.25</ecNumber>
    </recommendedName>
    <alternativeName>
        <fullName>ATP adenosine-5'-phosphosulfate 3'-phosphotransferase</fullName>
    </alternativeName>
    <alternativeName>
        <fullName>Adenosine-5'-phosphosulfate kinase</fullName>
        <shortName>APS kinase</shortName>
    </alternativeName>
</protein>
<proteinExistence type="evidence at protein level"/>
<name>KAPS_PENCH</name>
<comment type="function">
    <text>Catalyzes the synthesis of activated sulfate.</text>
</comment>
<comment type="catalytic activity">
    <reaction>
        <text>adenosine 5'-phosphosulfate + ATP = 3'-phosphoadenylyl sulfate + ADP + H(+)</text>
        <dbReference type="Rhea" id="RHEA:24152"/>
        <dbReference type="ChEBI" id="CHEBI:15378"/>
        <dbReference type="ChEBI" id="CHEBI:30616"/>
        <dbReference type="ChEBI" id="CHEBI:58243"/>
        <dbReference type="ChEBI" id="CHEBI:58339"/>
        <dbReference type="ChEBI" id="CHEBI:456216"/>
        <dbReference type="EC" id="2.7.1.25"/>
    </reaction>
</comment>
<comment type="pathway">
    <text>Sulfur metabolism; hydrogen sulfide biosynthesis; sulfite from sulfate: step 2/3.</text>
</comment>
<comment type="subunit">
    <text>Homodimer.</text>
</comment>
<comment type="similarity">
    <text evidence="3">Belongs to the APS kinase family.</text>
</comment>
<keyword id="KW-0002">3D-structure</keyword>
<keyword id="KW-0028">Amino-acid biosynthesis</keyword>
<keyword id="KW-0067">ATP-binding</keyword>
<keyword id="KW-0198">Cysteine biosynthesis</keyword>
<keyword id="KW-0418">Kinase</keyword>
<keyword id="KW-0486">Methionine biosynthesis</keyword>
<keyword id="KW-0547">Nucleotide-binding</keyword>
<keyword id="KW-0597">Phosphoprotein</keyword>
<keyword id="KW-0808">Transferase</keyword>
<organism>
    <name type="scientific">Penicillium chrysogenum</name>
    <name type="common">Penicillium notatum</name>
    <dbReference type="NCBI Taxonomy" id="5076"/>
    <lineage>
        <taxon>Eukaryota</taxon>
        <taxon>Fungi</taxon>
        <taxon>Dikarya</taxon>
        <taxon>Ascomycota</taxon>
        <taxon>Pezizomycotina</taxon>
        <taxon>Eurotiomycetes</taxon>
        <taxon>Eurotiomycetidae</taxon>
        <taxon>Eurotiales</taxon>
        <taxon>Aspergillaceae</taxon>
        <taxon>Penicillium</taxon>
        <taxon>Penicillium chrysogenum species complex</taxon>
    </lineage>
</organism>
<accession>Q12657</accession>
<reference key="1">
    <citation type="submission" date="1995-10" db="EMBL/GenBank/DDBJ databases">
        <authorList>
            <person name="Foster B.A."/>
        </authorList>
    </citation>
    <scope>NUCLEOTIDE SEQUENCE [GENOMIC DNA]</scope>
    <source>
        <strain>ATCC 24791 / PS-75</strain>
    </source>
</reference>
<reference key="2">
    <citation type="journal article" date="2000" name="Biochemistry">
        <title>Crystal structure of adenosine 5'-phosphosulfate kinase from Penicillium chrysogenum.</title>
        <authorList>
            <person name="MacRae I.J."/>
            <person name="Segel I.H."/>
            <person name="Fisher A.J."/>
        </authorList>
    </citation>
    <scope>X-RAY CRYSTALLOGRAPHY (2.0 ANGSTROMS)</scope>
</reference>
<reference key="3">
    <citation type="journal article" date="2002" name="Biochemistry">
        <title>Ligand-induced structural changes in adenosine 5'-phosphosulfate kinase from Penicillium chrysogenum.</title>
        <authorList>
            <person name="Lansdon E.B."/>
            <person name="Segel I.H."/>
            <person name="Fisher A.J."/>
        </authorList>
    </citation>
    <scope>X-RAY CRYSTALLOGRAPHY (1.43 ANGSTROMS)</scope>
</reference>
<evidence type="ECO:0000250" key="1"/>
<evidence type="ECO:0000255" key="2"/>
<evidence type="ECO:0000305" key="3"/>
<evidence type="ECO:0007829" key="4">
    <source>
        <dbReference type="PDB" id="1D6J"/>
    </source>
</evidence>
<evidence type="ECO:0007829" key="5">
    <source>
        <dbReference type="PDB" id="1M7G"/>
    </source>
</evidence>
<dbReference type="EC" id="2.7.1.25"/>
<dbReference type="EMBL" id="U39393">
    <property type="protein sequence ID" value="AAA81521.1"/>
    <property type="molecule type" value="Genomic_DNA"/>
</dbReference>
<dbReference type="PDB" id="1D6J">
    <property type="method" value="X-ray"/>
    <property type="resolution" value="2.00 A"/>
    <property type="chains" value="A/B=1-211"/>
</dbReference>
<dbReference type="PDB" id="1M7G">
    <property type="method" value="X-ray"/>
    <property type="resolution" value="1.43 A"/>
    <property type="chains" value="A/B/C/D=1-211"/>
</dbReference>
<dbReference type="PDB" id="1M7H">
    <property type="method" value="X-ray"/>
    <property type="resolution" value="2.00 A"/>
    <property type="chains" value="A/B/C/D=1-211"/>
</dbReference>
<dbReference type="PDB" id="3CR7">
    <property type="method" value="X-ray"/>
    <property type="resolution" value="2.50 A"/>
    <property type="chains" value="A/B/C/D=23-211"/>
</dbReference>
<dbReference type="PDBsum" id="1D6J"/>
<dbReference type="PDBsum" id="1M7G"/>
<dbReference type="PDBsum" id="1M7H"/>
<dbReference type="PDBsum" id="3CR7"/>
<dbReference type="SMR" id="Q12657"/>
<dbReference type="BRENDA" id="2.7.1.25">
    <property type="organism ID" value="4606"/>
</dbReference>
<dbReference type="UniPathway" id="UPA00140">
    <property type="reaction ID" value="UER00205"/>
</dbReference>
<dbReference type="EvolutionaryTrace" id="Q12657"/>
<dbReference type="GO" id="GO:0005829">
    <property type="term" value="C:cytosol"/>
    <property type="evidence" value="ECO:0000304"/>
    <property type="project" value="Reactome"/>
</dbReference>
<dbReference type="GO" id="GO:0004020">
    <property type="term" value="F:adenylylsulfate kinase activity"/>
    <property type="evidence" value="ECO:0007669"/>
    <property type="project" value="UniProtKB-EC"/>
</dbReference>
<dbReference type="GO" id="GO:0005524">
    <property type="term" value="F:ATP binding"/>
    <property type="evidence" value="ECO:0007669"/>
    <property type="project" value="UniProtKB-KW"/>
</dbReference>
<dbReference type="GO" id="GO:0019344">
    <property type="term" value="P:cysteine biosynthetic process"/>
    <property type="evidence" value="ECO:0007669"/>
    <property type="project" value="UniProtKB-KW"/>
</dbReference>
<dbReference type="GO" id="GO:0070814">
    <property type="term" value="P:hydrogen sulfide biosynthetic process"/>
    <property type="evidence" value="ECO:0007669"/>
    <property type="project" value="UniProtKB-UniPathway"/>
</dbReference>
<dbReference type="GO" id="GO:0009086">
    <property type="term" value="P:methionine biosynthetic process"/>
    <property type="evidence" value="ECO:0007669"/>
    <property type="project" value="UniProtKB-KW"/>
</dbReference>
<dbReference type="GO" id="GO:0000103">
    <property type="term" value="P:sulfate assimilation"/>
    <property type="evidence" value="ECO:0007669"/>
    <property type="project" value="InterPro"/>
</dbReference>
<dbReference type="CDD" id="cd02027">
    <property type="entry name" value="APSK"/>
    <property type="match status" value="1"/>
</dbReference>
<dbReference type="FunFam" id="3.40.50.300:FF:000212">
    <property type="entry name" value="Adenylyl-sulfate kinase"/>
    <property type="match status" value="1"/>
</dbReference>
<dbReference type="Gene3D" id="3.40.50.300">
    <property type="entry name" value="P-loop containing nucleotide triphosphate hydrolases"/>
    <property type="match status" value="1"/>
</dbReference>
<dbReference type="HAMAP" id="MF_00065">
    <property type="entry name" value="Adenylyl_sulf_kinase"/>
    <property type="match status" value="1"/>
</dbReference>
<dbReference type="InterPro" id="IPR002891">
    <property type="entry name" value="APS_kinase"/>
</dbReference>
<dbReference type="InterPro" id="IPR027417">
    <property type="entry name" value="P-loop_NTPase"/>
</dbReference>
<dbReference type="NCBIfam" id="TIGR00455">
    <property type="entry name" value="apsK"/>
    <property type="match status" value="1"/>
</dbReference>
<dbReference type="NCBIfam" id="NF003013">
    <property type="entry name" value="PRK03846.1"/>
    <property type="match status" value="1"/>
</dbReference>
<dbReference type="PANTHER" id="PTHR11055">
    <property type="entry name" value="BIFUNCTIONAL 3'-PHOSPHOADENOSINE 5'-PHOSPHOSULFATE SYNTHASE"/>
    <property type="match status" value="1"/>
</dbReference>
<dbReference type="PANTHER" id="PTHR11055:SF1">
    <property type="entry name" value="PAPS SYNTHETASE, ISOFORM D"/>
    <property type="match status" value="1"/>
</dbReference>
<dbReference type="Pfam" id="PF01583">
    <property type="entry name" value="APS_kinase"/>
    <property type="match status" value="1"/>
</dbReference>
<dbReference type="SUPFAM" id="SSF52540">
    <property type="entry name" value="P-loop containing nucleoside triphosphate hydrolases"/>
    <property type="match status" value="1"/>
</dbReference>